<name>CCMC_RHILV</name>
<accession>P45407</accession>
<comment type="function">
    <text>Required for the export of heme to the periplasm for the biogenesis of c-type cytochromes.</text>
</comment>
<comment type="subcellular location">
    <subcellularLocation>
        <location evidence="1">Cell inner membrane</location>
        <topology evidence="1">Multi-pass membrane protein</topology>
    </subcellularLocation>
</comment>
<comment type="similarity">
    <text evidence="1">Belongs to the CcmC/CycZ/HelC family.</text>
</comment>
<dbReference type="EMBL" id="X79307">
    <property type="protein sequence ID" value="CAA55886.1"/>
    <property type="molecule type" value="Genomic_DNA"/>
</dbReference>
<dbReference type="SMR" id="P45407"/>
<dbReference type="GO" id="GO:0005886">
    <property type="term" value="C:plasma membrane"/>
    <property type="evidence" value="ECO:0007669"/>
    <property type="project" value="UniProtKB-SubCell"/>
</dbReference>
<dbReference type="GO" id="GO:0017004">
    <property type="term" value="P:cytochrome complex assembly"/>
    <property type="evidence" value="ECO:0007669"/>
    <property type="project" value="UniProtKB-KW"/>
</dbReference>
<organism>
    <name type="scientific">Rhizobium leguminosarum bv. viciae</name>
    <dbReference type="NCBI Taxonomy" id="387"/>
    <lineage>
        <taxon>Bacteria</taxon>
        <taxon>Pseudomonadati</taxon>
        <taxon>Pseudomonadota</taxon>
        <taxon>Alphaproteobacteria</taxon>
        <taxon>Hyphomicrobiales</taxon>
        <taxon>Rhizobiaceae</taxon>
        <taxon>Rhizobium/Agrobacterium group</taxon>
        <taxon>Rhizobium</taxon>
    </lineage>
</organism>
<proteinExistence type="inferred from homology"/>
<reference key="1">
    <citation type="journal article" date="1994" name="J. Bacteriol.">
        <title>Identification of a gene encoding a thioredoxin-like product necessary for cytochrome c biosynthesis and symbiotic nitrogen fixation in Rhizobium leguminosarum.</title>
        <authorList>
            <person name="Vargas C."/>
            <person name="Wu G."/>
            <person name="Davies A.E."/>
            <person name="Downie J.A."/>
        </authorList>
    </citation>
    <scope>NUCLEOTIDE SEQUENCE [GENOMIC DNA]</scope>
    <source>
        <strain>8401</strain>
    </source>
</reference>
<evidence type="ECO:0000305" key="1"/>
<sequence length="49" mass="5966">EFLRPLFIMAIAFTLLFFTLHIMAMRNEIWRRRIAAQRRLAARMASREE</sequence>
<protein>
    <recommendedName>
        <fullName>Heme exporter protein C</fullName>
    </recommendedName>
    <alternativeName>
        <fullName>Cytochrome c-type biogenesis protein CycZ</fullName>
    </alternativeName>
</protein>
<keyword id="KW-0997">Cell inner membrane</keyword>
<keyword id="KW-1003">Cell membrane</keyword>
<keyword id="KW-0201">Cytochrome c-type biogenesis</keyword>
<keyword id="KW-0472">Membrane</keyword>
<keyword id="KW-0812">Transmembrane</keyword>
<keyword id="KW-0813">Transport</keyword>
<feature type="chain" id="PRO_0000201559" description="Heme exporter protein C">
    <location>
        <begin position="1" status="less than"/>
        <end position="49"/>
    </location>
</feature>
<feature type="non-terminal residue">
    <location>
        <position position="1"/>
    </location>
</feature>